<accession>A3N1V3</accession>
<protein>
    <recommendedName>
        <fullName evidence="1">Cell division protein ZipA</fullName>
    </recommendedName>
</protein>
<keyword id="KW-0131">Cell cycle</keyword>
<keyword id="KW-0132">Cell division</keyword>
<keyword id="KW-0997">Cell inner membrane</keyword>
<keyword id="KW-1003">Cell membrane</keyword>
<keyword id="KW-0472">Membrane</keyword>
<keyword id="KW-1185">Reference proteome</keyword>
<keyword id="KW-0812">Transmembrane</keyword>
<keyword id="KW-1133">Transmembrane helix</keyword>
<name>ZIPA_ACTP2</name>
<feature type="chain" id="PRO_1000015138" description="Cell division protein ZipA">
    <location>
        <begin position="1"/>
        <end position="336"/>
    </location>
</feature>
<feature type="topological domain" description="Periplasmic" evidence="1">
    <location>
        <begin position="1"/>
        <end position="2"/>
    </location>
</feature>
<feature type="transmembrane region" description="Helical" evidence="1">
    <location>
        <begin position="3"/>
        <end position="23"/>
    </location>
</feature>
<feature type="topological domain" description="Cytoplasmic" evidence="1">
    <location>
        <begin position="24"/>
        <end position="336"/>
    </location>
</feature>
<dbReference type="EMBL" id="CP000569">
    <property type="protein sequence ID" value="ABN74389.1"/>
    <property type="molecule type" value="Genomic_DNA"/>
</dbReference>
<dbReference type="RefSeq" id="WP_009875368.1">
    <property type="nucleotide sequence ID" value="NC_009053.1"/>
</dbReference>
<dbReference type="SMR" id="A3N1V3"/>
<dbReference type="STRING" id="416269.APL_1303"/>
<dbReference type="EnsemblBacteria" id="ABN74389">
    <property type="protein sequence ID" value="ABN74389"/>
    <property type="gene ID" value="APL_1303"/>
</dbReference>
<dbReference type="KEGG" id="apl:APL_1303"/>
<dbReference type="PATRIC" id="fig|416269.6.peg.1360"/>
<dbReference type="eggNOG" id="COG3115">
    <property type="taxonomic scope" value="Bacteria"/>
</dbReference>
<dbReference type="HOGENOM" id="CLU_030174_1_0_6"/>
<dbReference type="Proteomes" id="UP000001432">
    <property type="component" value="Chromosome"/>
</dbReference>
<dbReference type="GO" id="GO:0032153">
    <property type="term" value="C:cell division site"/>
    <property type="evidence" value="ECO:0007669"/>
    <property type="project" value="UniProtKB-UniRule"/>
</dbReference>
<dbReference type="GO" id="GO:0005886">
    <property type="term" value="C:plasma membrane"/>
    <property type="evidence" value="ECO:0007669"/>
    <property type="project" value="UniProtKB-SubCell"/>
</dbReference>
<dbReference type="GO" id="GO:0000917">
    <property type="term" value="P:division septum assembly"/>
    <property type="evidence" value="ECO:0007669"/>
    <property type="project" value="TreeGrafter"/>
</dbReference>
<dbReference type="GO" id="GO:0043093">
    <property type="term" value="P:FtsZ-dependent cytokinesis"/>
    <property type="evidence" value="ECO:0007669"/>
    <property type="project" value="UniProtKB-UniRule"/>
</dbReference>
<dbReference type="Gene3D" id="3.30.1400.10">
    <property type="entry name" value="ZipA, C-terminal FtsZ-binding domain"/>
    <property type="match status" value="1"/>
</dbReference>
<dbReference type="HAMAP" id="MF_00509">
    <property type="entry name" value="ZipA"/>
    <property type="match status" value="1"/>
</dbReference>
<dbReference type="InterPro" id="IPR011919">
    <property type="entry name" value="Cell_div_ZipA"/>
</dbReference>
<dbReference type="InterPro" id="IPR007449">
    <property type="entry name" value="ZipA_FtsZ-bd_C"/>
</dbReference>
<dbReference type="InterPro" id="IPR036765">
    <property type="entry name" value="ZipA_FtsZ-bd_C_sf"/>
</dbReference>
<dbReference type="NCBIfam" id="TIGR02205">
    <property type="entry name" value="septum_zipA"/>
    <property type="match status" value="1"/>
</dbReference>
<dbReference type="PANTHER" id="PTHR38685">
    <property type="entry name" value="CELL DIVISION PROTEIN ZIPA"/>
    <property type="match status" value="1"/>
</dbReference>
<dbReference type="PANTHER" id="PTHR38685:SF1">
    <property type="entry name" value="CELL DIVISION PROTEIN ZIPA"/>
    <property type="match status" value="1"/>
</dbReference>
<dbReference type="Pfam" id="PF04354">
    <property type="entry name" value="ZipA_C"/>
    <property type="match status" value="1"/>
</dbReference>
<dbReference type="SMART" id="SM00771">
    <property type="entry name" value="ZipA_C"/>
    <property type="match status" value="1"/>
</dbReference>
<dbReference type="SUPFAM" id="SSF64383">
    <property type="entry name" value="Cell-division protein ZipA, C-terminal domain"/>
    <property type="match status" value="1"/>
</dbReference>
<reference key="1">
    <citation type="journal article" date="2008" name="J. Bacteriol.">
        <title>The complete genome sequence of Actinobacillus pleuropneumoniae L20 (serotype 5b).</title>
        <authorList>
            <person name="Foote S.J."/>
            <person name="Bosse J.T."/>
            <person name="Bouevitch A.B."/>
            <person name="Langford P.R."/>
            <person name="Young N.M."/>
            <person name="Nash J.H.E."/>
        </authorList>
    </citation>
    <scope>NUCLEOTIDE SEQUENCE [LARGE SCALE GENOMIC DNA]</scope>
    <source>
        <strain>L20</strain>
    </source>
</reference>
<evidence type="ECO:0000255" key="1">
    <source>
        <dbReference type="HAMAP-Rule" id="MF_00509"/>
    </source>
</evidence>
<proteinExistence type="inferred from homology"/>
<sequence length="336" mass="37464">MELHILFFILAGLLIAVLIGFSLWSARREKSRIFSNTFSTRPPSTPINNVVSDVPPSLNPQSYSQTMGQNSEIEVDNPVQIQQEVESSLREIKINLPGQDSAAYQNRPQETPIYSGQPVQPVQTQYQAQAQYQSQPQHIEPAFTQAPQSPIAEATSVLEQSVEELERQAAQGDVDIYSDASVRVELAKNSMQADSVAEQKPVAENNMLTLYVVAPEGQQFRGDYVVQSLEALGFQYGEYQIFHRHQHMGNSASPVIFSVANMMQPGIFDLTKIEHFSTVGLVLFMHLPSEGNDVVNLKLLLKTTENLAQALGGFVLNEHREIFDENSRQAYLARVS</sequence>
<gene>
    <name evidence="1" type="primary">zipA</name>
    <name type="ordered locus">APL_1303</name>
</gene>
<comment type="function">
    <text evidence="1">Essential cell division protein that stabilizes the FtsZ protofilaments by cross-linking them and that serves as a cytoplasmic membrane anchor for the Z ring. Also required for the recruitment to the septal ring of downstream cell division proteins.</text>
</comment>
<comment type="subunit">
    <text evidence="1">Interacts with FtsZ via their C-terminal domains.</text>
</comment>
<comment type="subcellular location">
    <subcellularLocation>
        <location evidence="1">Cell inner membrane</location>
        <topology evidence="1">Single-pass type I membrane protein</topology>
    </subcellularLocation>
    <text evidence="1">Localizes to the Z ring in an FtsZ-dependent manner.</text>
</comment>
<comment type="similarity">
    <text evidence="1">Belongs to the ZipA family.</text>
</comment>
<organism>
    <name type="scientific">Actinobacillus pleuropneumoniae serotype 5b (strain L20)</name>
    <dbReference type="NCBI Taxonomy" id="416269"/>
    <lineage>
        <taxon>Bacteria</taxon>
        <taxon>Pseudomonadati</taxon>
        <taxon>Pseudomonadota</taxon>
        <taxon>Gammaproteobacteria</taxon>
        <taxon>Pasteurellales</taxon>
        <taxon>Pasteurellaceae</taxon>
        <taxon>Actinobacillus</taxon>
    </lineage>
</organism>